<dbReference type="EC" id="3.1.11.6" evidence="1"/>
<dbReference type="EMBL" id="CP000857">
    <property type="protein sequence ID" value="ACN44619.1"/>
    <property type="molecule type" value="Genomic_DNA"/>
</dbReference>
<dbReference type="RefSeq" id="WP_001124944.1">
    <property type="nucleotide sequence ID" value="NC_012125.1"/>
</dbReference>
<dbReference type="SMR" id="C0Q7U9"/>
<dbReference type="KEGG" id="sei:SPC_0436"/>
<dbReference type="HOGENOM" id="CLU_145918_3_3_6"/>
<dbReference type="Proteomes" id="UP000001599">
    <property type="component" value="Chromosome"/>
</dbReference>
<dbReference type="GO" id="GO:0005829">
    <property type="term" value="C:cytosol"/>
    <property type="evidence" value="ECO:0007669"/>
    <property type="project" value="TreeGrafter"/>
</dbReference>
<dbReference type="GO" id="GO:0009318">
    <property type="term" value="C:exodeoxyribonuclease VII complex"/>
    <property type="evidence" value="ECO:0007669"/>
    <property type="project" value="InterPro"/>
</dbReference>
<dbReference type="GO" id="GO:0008855">
    <property type="term" value="F:exodeoxyribonuclease VII activity"/>
    <property type="evidence" value="ECO:0007669"/>
    <property type="project" value="UniProtKB-UniRule"/>
</dbReference>
<dbReference type="GO" id="GO:0006308">
    <property type="term" value="P:DNA catabolic process"/>
    <property type="evidence" value="ECO:0007669"/>
    <property type="project" value="UniProtKB-UniRule"/>
</dbReference>
<dbReference type="FunFam" id="1.10.287.1040:FF:000001">
    <property type="entry name" value="Exodeoxyribonuclease 7 small subunit"/>
    <property type="match status" value="1"/>
</dbReference>
<dbReference type="Gene3D" id="1.10.287.1040">
    <property type="entry name" value="Exonuclease VII, small subunit"/>
    <property type="match status" value="1"/>
</dbReference>
<dbReference type="HAMAP" id="MF_00337">
    <property type="entry name" value="Exonuc_7_S"/>
    <property type="match status" value="1"/>
</dbReference>
<dbReference type="InterPro" id="IPR003761">
    <property type="entry name" value="Exonuc_VII_S"/>
</dbReference>
<dbReference type="InterPro" id="IPR037004">
    <property type="entry name" value="Exonuc_VII_ssu_sf"/>
</dbReference>
<dbReference type="NCBIfam" id="NF002137">
    <property type="entry name" value="PRK00977.1-1"/>
    <property type="match status" value="1"/>
</dbReference>
<dbReference type="NCBIfam" id="NF002140">
    <property type="entry name" value="PRK00977.1-4"/>
    <property type="match status" value="1"/>
</dbReference>
<dbReference type="NCBIfam" id="TIGR01280">
    <property type="entry name" value="xseB"/>
    <property type="match status" value="1"/>
</dbReference>
<dbReference type="PANTHER" id="PTHR34137">
    <property type="entry name" value="EXODEOXYRIBONUCLEASE 7 SMALL SUBUNIT"/>
    <property type="match status" value="1"/>
</dbReference>
<dbReference type="PANTHER" id="PTHR34137:SF1">
    <property type="entry name" value="EXODEOXYRIBONUCLEASE 7 SMALL SUBUNIT"/>
    <property type="match status" value="1"/>
</dbReference>
<dbReference type="Pfam" id="PF02609">
    <property type="entry name" value="Exonuc_VII_S"/>
    <property type="match status" value="1"/>
</dbReference>
<dbReference type="PIRSF" id="PIRSF006488">
    <property type="entry name" value="Exonuc_VII_S"/>
    <property type="match status" value="1"/>
</dbReference>
<dbReference type="SUPFAM" id="SSF116842">
    <property type="entry name" value="XseB-like"/>
    <property type="match status" value="1"/>
</dbReference>
<organism>
    <name type="scientific">Salmonella paratyphi C (strain RKS4594)</name>
    <dbReference type="NCBI Taxonomy" id="476213"/>
    <lineage>
        <taxon>Bacteria</taxon>
        <taxon>Pseudomonadati</taxon>
        <taxon>Pseudomonadota</taxon>
        <taxon>Gammaproteobacteria</taxon>
        <taxon>Enterobacterales</taxon>
        <taxon>Enterobacteriaceae</taxon>
        <taxon>Salmonella</taxon>
    </lineage>
</organism>
<comment type="function">
    <text evidence="1">Bidirectionally degrades single-stranded DNA into large acid-insoluble oligonucleotides, which are then degraded further into small acid-soluble oligonucleotides.</text>
</comment>
<comment type="catalytic activity">
    <reaction evidence="1">
        <text>Exonucleolytic cleavage in either 5'- to 3'- or 3'- to 5'-direction to yield nucleoside 5'-phosphates.</text>
        <dbReference type="EC" id="3.1.11.6"/>
    </reaction>
</comment>
<comment type="subunit">
    <text evidence="1">Heterooligomer composed of large and small subunits.</text>
</comment>
<comment type="subcellular location">
    <subcellularLocation>
        <location evidence="1">Cytoplasm</location>
    </subcellularLocation>
</comment>
<comment type="similarity">
    <text evidence="1">Belongs to the XseB family.</text>
</comment>
<keyword id="KW-0963">Cytoplasm</keyword>
<keyword id="KW-0269">Exonuclease</keyword>
<keyword id="KW-0378">Hydrolase</keyword>
<keyword id="KW-0540">Nuclease</keyword>
<sequence length="80" mass="8932">MPKKNEAPASFETALSELEHIVTRLESGDLPLEDALNEFERGVQLARQGQAKLQQAEQRVQILLSDNEEASPEPFIADNE</sequence>
<reference key="1">
    <citation type="journal article" date="2009" name="PLoS ONE">
        <title>Salmonella paratyphi C: genetic divergence from Salmonella choleraesuis and pathogenic convergence with Salmonella typhi.</title>
        <authorList>
            <person name="Liu W.-Q."/>
            <person name="Feng Y."/>
            <person name="Wang Y."/>
            <person name="Zou Q.-H."/>
            <person name="Chen F."/>
            <person name="Guo J.-T."/>
            <person name="Peng Y.-H."/>
            <person name="Jin Y."/>
            <person name="Li Y.-G."/>
            <person name="Hu S.-N."/>
            <person name="Johnston R.N."/>
            <person name="Liu G.-R."/>
            <person name="Liu S.-L."/>
        </authorList>
    </citation>
    <scope>NUCLEOTIDE SEQUENCE [LARGE SCALE GENOMIC DNA]</scope>
    <source>
        <strain>RKS4594</strain>
    </source>
</reference>
<gene>
    <name evidence="1" type="primary">xseB</name>
    <name type="ordered locus">SPC_0436</name>
</gene>
<protein>
    <recommendedName>
        <fullName evidence="1">Exodeoxyribonuclease 7 small subunit</fullName>
        <ecNumber evidence="1">3.1.11.6</ecNumber>
    </recommendedName>
    <alternativeName>
        <fullName evidence="1">Exodeoxyribonuclease VII small subunit</fullName>
        <shortName evidence="1">Exonuclease VII small subunit</shortName>
    </alternativeName>
</protein>
<name>EX7S_SALPC</name>
<evidence type="ECO:0000255" key="1">
    <source>
        <dbReference type="HAMAP-Rule" id="MF_00337"/>
    </source>
</evidence>
<accession>C0Q7U9</accession>
<feature type="chain" id="PRO_1000200259" description="Exodeoxyribonuclease 7 small subunit">
    <location>
        <begin position="1"/>
        <end position="80"/>
    </location>
</feature>
<proteinExistence type="inferred from homology"/>